<evidence type="ECO:0000250" key="1"/>
<evidence type="ECO:0000255" key="2"/>
<evidence type="ECO:0000305" key="3"/>
<organism>
    <name type="scientific">Solanum tuberosum</name>
    <name type="common">Potato</name>
    <dbReference type="NCBI Taxonomy" id="4113"/>
    <lineage>
        <taxon>Eukaryota</taxon>
        <taxon>Viridiplantae</taxon>
        <taxon>Streptophyta</taxon>
        <taxon>Embryophyta</taxon>
        <taxon>Tracheophyta</taxon>
        <taxon>Spermatophyta</taxon>
        <taxon>Magnoliopsida</taxon>
        <taxon>eudicotyledons</taxon>
        <taxon>Gunneridae</taxon>
        <taxon>Pentapetalae</taxon>
        <taxon>asterids</taxon>
        <taxon>lamiids</taxon>
        <taxon>Solanales</taxon>
        <taxon>Solanaceae</taxon>
        <taxon>Solanoideae</taxon>
        <taxon>Solaneae</taxon>
        <taxon>Solanum</taxon>
    </lineage>
</organism>
<feature type="transit peptide" description="Mitochondrion" evidence="2">
    <location>
        <begin position="1"/>
        <end position="64"/>
    </location>
</feature>
<feature type="chain" id="PRO_0000010750" description="Glycine dehydrogenase (decarboxylating), mitochondrial">
    <location>
        <begin position="65"/>
        <end position="1035"/>
    </location>
</feature>
<feature type="modified residue" description="N6-(pyridoxal phosphate)lysine" evidence="1">
    <location>
        <position position="771"/>
    </location>
</feature>
<reference key="1">
    <citation type="online journal article" date="1998" name="Plant Gene Register">
        <title>cDNA encoding P-protein of the glycine cleavage system in Solanum tuberosum Cv. Desire.</title>
        <authorList>
            <person name="Bauwe H."/>
        </authorList>
        <locator>PGR98-005</locator>
    </citation>
    <scope>NUCLEOTIDE SEQUENCE [MRNA]</scope>
    <source>
        <strain>cv. Desiree</strain>
        <tissue>Leaf</tissue>
    </source>
</reference>
<comment type="function">
    <text>The glycine cleavage system catalyzes the degradation of glycine. The P protein binds the alpha-amino group of glycine through its pyridoxal phosphate cofactor; CO(2) is released and the remaining methylamine moiety is then transferred to the lipoamide cofactor of the H protein.</text>
</comment>
<comment type="catalytic activity">
    <reaction>
        <text>N(6)-[(R)-lipoyl]-L-lysyl-[glycine-cleavage complex H protein] + glycine + H(+) = N(6)-[(R)-S(8)-aminomethyldihydrolipoyl]-L-lysyl-[glycine-cleavage complex H protein] + CO2</text>
        <dbReference type="Rhea" id="RHEA:24304"/>
        <dbReference type="Rhea" id="RHEA-COMP:10494"/>
        <dbReference type="Rhea" id="RHEA-COMP:10495"/>
        <dbReference type="ChEBI" id="CHEBI:15378"/>
        <dbReference type="ChEBI" id="CHEBI:16526"/>
        <dbReference type="ChEBI" id="CHEBI:57305"/>
        <dbReference type="ChEBI" id="CHEBI:83099"/>
        <dbReference type="ChEBI" id="CHEBI:83143"/>
        <dbReference type="EC" id="1.4.4.2"/>
    </reaction>
</comment>
<comment type="cofactor">
    <cofactor>
        <name>pyridoxal 5'-phosphate</name>
        <dbReference type="ChEBI" id="CHEBI:597326"/>
    </cofactor>
</comment>
<comment type="subunit">
    <text evidence="1">Homodimer (By similarity). The glycine cleavage system is composed of four proteins: P, T, L and H.</text>
</comment>
<comment type="subcellular location">
    <subcellularLocation>
        <location>Mitochondrion</location>
    </subcellularLocation>
</comment>
<comment type="similarity">
    <text evidence="3">Belongs to the GcvP family.</text>
</comment>
<accession>O49954</accession>
<protein>
    <recommendedName>
        <fullName>Glycine dehydrogenase (decarboxylating), mitochondrial</fullName>
        <ecNumber>1.4.4.2</ecNumber>
    </recommendedName>
    <alternativeName>
        <fullName>Glycine cleavage system P protein</fullName>
    </alternativeName>
    <alternativeName>
        <fullName>Glycine decarboxylase</fullName>
    </alternativeName>
    <alternativeName>
        <fullName>Glycine dehydrogenase (aminomethyl-transferring)</fullName>
    </alternativeName>
</protein>
<proteinExistence type="evidence at transcript level"/>
<dbReference type="EC" id="1.4.4.2"/>
<dbReference type="EMBL" id="Z99770">
    <property type="protein sequence ID" value="CAB16918.1"/>
    <property type="molecule type" value="mRNA"/>
</dbReference>
<dbReference type="PIR" id="T07826">
    <property type="entry name" value="T07826"/>
</dbReference>
<dbReference type="RefSeq" id="NP_001305600.1">
    <property type="nucleotide sequence ID" value="NM_001318671.1"/>
</dbReference>
<dbReference type="SMR" id="O49954"/>
<dbReference type="FunCoup" id="O49954">
    <property type="interactions" value="1594"/>
</dbReference>
<dbReference type="IntAct" id="O49954">
    <property type="interactions" value="1"/>
</dbReference>
<dbReference type="STRING" id="4113.O49954"/>
<dbReference type="PaxDb" id="4113-PGSC0003DMT400076966"/>
<dbReference type="GeneID" id="102601213"/>
<dbReference type="KEGG" id="sot:102601213"/>
<dbReference type="eggNOG" id="KOG2040">
    <property type="taxonomic scope" value="Eukaryota"/>
</dbReference>
<dbReference type="InParanoid" id="O49954"/>
<dbReference type="OrthoDB" id="6537869at2759"/>
<dbReference type="Proteomes" id="UP000011115">
    <property type="component" value="Unassembled WGS sequence"/>
</dbReference>
<dbReference type="ExpressionAtlas" id="O49954">
    <property type="expression patterns" value="baseline"/>
</dbReference>
<dbReference type="GO" id="GO:0005960">
    <property type="term" value="C:glycine cleavage complex"/>
    <property type="evidence" value="ECO:0000318"/>
    <property type="project" value="GO_Central"/>
</dbReference>
<dbReference type="GO" id="GO:0005739">
    <property type="term" value="C:mitochondrion"/>
    <property type="evidence" value="ECO:0000318"/>
    <property type="project" value="GO_Central"/>
</dbReference>
<dbReference type="GO" id="GO:0016594">
    <property type="term" value="F:glycine binding"/>
    <property type="evidence" value="ECO:0000318"/>
    <property type="project" value="GO_Central"/>
</dbReference>
<dbReference type="GO" id="GO:0004375">
    <property type="term" value="F:glycine dehydrogenase (decarboxylating) activity"/>
    <property type="evidence" value="ECO:0000318"/>
    <property type="project" value="GO_Central"/>
</dbReference>
<dbReference type="GO" id="GO:0030170">
    <property type="term" value="F:pyridoxal phosphate binding"/>
    <property type="evidence" value="ECO:0000318"/>
    <property type="project" value="GO_Central"/>
</dbReference>
<dbReference type="GO" id="GO:0019464">
    <property type="term" value="P:glycine decarboxylation via glycine cleavage system"/>
    <property type="evidence" value="ECO:0000318"/>
    <property type="project" value="GO_Central"/>
</dbReference>
<dbReference type="CDD" id="cd00613">
    <property type="entry name" value="GDC-P"/>
    <property type="match status" value="2"/>
</dbReference>
<dbReference type="FunFam" id="3.90.1150.10:FF:000025">
    <property type="entry name" value="Glycine cleavage system P protein"/>
    <property type="match status" value="1"/>
</dbReference>
<dbReference type="FunFam" id="3.40.640.10:FF:000005">
    <property type="entry name" value="Glycine dehydrogenase (decarboxylating), mitochondrial"/>
    <property type="match status" value="1"/>
</dbReference>
<dbReference type="FunFam" id="3.90.1150.10:FF:000007">
    <property type="entry name" value="Glycine dehydrogenase (decarboxylating), mitochondrial"/>
    <property type="match status" value="1"/>
</dbReference>
<dbReference type="FunFam" id="3.40.640.10:FF:000007">
    <property type="entry name" value="glycine dehydrogenase (Decarboxylating), mitochondrial"/>
    <property type="match status" value="1"/>
</dbReference>
<dbReference type="Gene3D" id="3.90.1150.10">
    <property type="entry name" value="Aspartate Aminotransferase, domain 1"/>
    <property type="match status" value="2"/>
</dbReference>
<dbReference type="Gene3D" id="3.40.640.10">
    <property type="entry name" value="Type I PLP-dependent aspartate aminotransferase-like (Major domain)"/>
    <property type="match status" value="2"/>
</dbReference>
<dbReference type="HAMAP" id="MF_00711">
    <property type="entry name" value="GcvP"/>
    <property type="match status" value="1"/>
</dbReference>
<dbReference type="InterPro" id="IPR003437">
    <property type="entry name" value="GcvP"/>
</dbReference>
<dbReference type="InterPro" id="IPR049316">
    <property type="entry name" value="GDC-P_C"/>
</dbReference>
<dbReference type="InterPro" id="IPR049315">
    <property type="entry name" value="GDC-P_N"/>
</dbReference>
<dbReference type="InterPro" id="IPR020581">
    <property type="entry name" value="GDC_P"/>
</dbReference>
<dbReference type="InterPro" id="IPR015424">
    <property type="entry name" value="PyrdxlP-dep_Trfase"/>
</dbReference>
<dbReference type="InterPro" id="IPR015421">
    <property type="entry name" value="PyrdxlP-dep_Trfase_major"/>
</dbReference>
<dbReference type="InterPro" id="IPR015422">
    <property type="entry name" value="PyrdxlP-dep_Trfase_small"/>
</dbReference>
<dbReference type="NCBIfam" id="TIGR00461">
    <property type="entry name" value="gcvP"/>
    <property type="match status" value="1"/>
</dbReference>
<dbReference type="NCBIfam" id="NF003346">
    <property type="entry name" value="PRK04366.1"/>
    <property type="match status" value="1"/>
</dbReference>
<dbReference type="PANTHER" id="PTHR11773:SF1">
    <property type="entry name" value="GLYCINE DEHYDROGENASE (DECARBOXYLATING), MITOCHONDRIAL"/>
    <property type="match status" value="1"/>
</dbReference>
<dbReference type="PANTHER" id="PTHR11773">
    <property type="entry name" value="GLYCINE DEHYDROGENASE, DECARBOXYLATING"/>
    <property type="match status" value="1"/>
</dbReference>
<dbReference type="Pfam" id="PF21478">
    <property type="entry name" value="GcvP2_C"/>
    <property type="match status" value="1"/>
</dbReference>
<dbReference type="Pfam" id="PF02347">
    <property type="entry name" value="GDC-P"/>
    <property type="match status" value="2"/>
</dbReference>
<dbReference type="SUPFAM" id="SSF53383">
    <property type="entry name" value="PLP-dependent transferases"/>
    <property type="match status" value="2"/>
</dbReference>
<keyword id="KW-0496">Mitochondrion</keyword>
<keyword id="KW-0560">Oxidoreductase</keyword>
<keyword id="KW-0663">Pyridoxal phosphate</keyword>
<keyword id="KW-1185">Reference proteome</keyword>
<keyword id="KW-0809">Transit peptide</keyword>
<gene>
    <name type="primary">GDCSP</name>
</gene>
<sequence>MERARKLANRAILKRLVSQSKQSRSNEIPSSSLYRPSRYVSSLSPYTFQARNNAKSFNTQQARSISVEALKPSDTFPRRHNSATPEEQTKMAEFCGFQSLDALIDATVPQSIRSESMKLPKFDSGLTESQMIEHMQNLASKNKVFKSYIGMGYYNTYVPPVILRNLLENPAWYTQYTPYQAEISQGRLESLLNYQTMITDLTGLPMSNASLLDEGTAAAEAMAMCNNILKGKKKTFLIASNCHPQTIDICKTRADGFDLKVVTVDLKDIDYKSGDVCGVLVQYPGTEGEILDYGEFIKNAHAHGVKVVMASDLLALTMLKPPGELGADIVVGSAQRFGVPMGYGGPHAAFLATSQEYKRMMPGRIIGLSVDSTGKPALRMAMQTREQHIRRDKATSNICTAQALLANMAAMYAVYHGPEGLKTIGQRVHGLAGTFSAGLKKLGTVEVQDLPFFDTVKVKCSDAKAIADVANKNDINLRIVDNNTITVSFDETTTLEDVDDLFKVFALGKPVPFTAQSIAQEVENLIPSGLTRETPFLTHQIFNSYHTEHELLRYLHKLQSKDLSLCHSMIPLGSCTMKLNATTEMMPVTWPSFANIHPFAPTEQAAGYQEMFDDLGALLCTITGFDSFSLQPNAGAAGEYAGLMVIRAYHMSRGDHHRNVCIIPVSAHGTNPASAAMCGMKIVAVGTDAKGNINIEELRKAAEANKDNLAALMVTYPSTHGVYEEGIDEICKIIHDNGGQVYMDGANMNAQVGLTSPGFIGADVCHLNLHKTFCIPHGGGGPGMGPIGVKKHLAPYLPSHPVVPTGGIPSPDKSEPLGAISAAPWGSALILPISYTYIAMMGSKGLTDASKIAILSANYMAKRLEKHYPVLFRGVNGTCAHEFIIDLRGFKNTAGIEPEDVAKRLIDYGFHGPTMSWPVPGTLMIEPTESESKAELDRFCDALISIREEIAQIEKGNVDINNNVLKGAPHPPSMLMADAWTKPYSREYAAYPAPWLRSAKFWPTTGRVDNVYGDRNLICTLLPVSEMAEEKAATA</sequence>
<name>GCSP_SOLTU</name>